<keyword id="KW-0007">Acetylation</keyword>
<keyword id="KW-0963">Cytoplasm</keyword>
<keyword id="KW-1017">Isopeptide bond</keyword>
<keyword id="KW-0520">NAD</keyword>
<keyword id="KW-0560">Oxidoreductase</keyword>
<keyword id="KW-0597">Phosphoprotein</keyword>
<keyword id="KW-1185">Reference proteome</keyword>
<keyword id="KW-0832">Ubl conjugation</keyword>
<organism>
    <name type="scientific">Pongo abelii</name>
    <name type="common">Sumatran orangutan</name>
    <name type="synonym">Pongo pygmaeus abelii</name>
    <dbReference type="NCBI Taxonomy" id="9601"/>
    <lineage>
        <taxon>Eukaryota</taxon>
        <taxon>Metazoa</taxon>
        <taxon>Chordata</taxon>
        <taxon>Craniata</taxon>
        <taxon>Vertebrata</taxon>
        <taxon>Euteleostomi</taxon>
        <taxon>Mammalia</taxon>
        <taxon>Eutheria</taxon>
        <taxon>Euarchontoglires</taxon>
        <taxon>Primates</taxon>
        <taxon>Haplorrhini</taxon>
        <taxon>Catarrhini</taxon>
        <taxon>Hominidae</taxon>
        <taxon>Pongo</taxon>
    </lineage>
</organism>
<proteinExistence type="evidence at transcript level"/>
<comment type="function">
    <text evidence="2">Interconverts simultaneously and stereospecifically pyruvate and lactate with concomitant interconversion of NADH and NAD(+).</text>
</comment>
<comment type="catalytic activity">
    <reaction evidence="2">
        <text>(S)-lactate + NAD(+) = pyruvate + NADH + H(+)</text>
        <dbReference type="Rhea" id="RHEA:23444"/>
        <dbReference type="ChEBI" id="CHEBI:15361"/>
        <dbReference type="ChEBI" id="CHEBI:15378"/>
        <dbReference type="ChEBI" id="CHEBI:16651"/>
        <dbReference type="ChEBI" id="CHEBI:57540"/>
        <dbReference type="ChEBI" id="CHEBI:57945"/>
        <dbReference type="EC" id="1.1.1.27"/>
    </reaction>
    <physiologicalReaction direction="left-to-right" evidence="2">
        <dbReference type="Rhea" id="RHEA:23445"/>
    </physiologicalReaction>
    <physiologicalReaction direction="right-to-left" evidence="2">
        <dbReference type="Rhea" id="RHEA:23446"/>
    </physiologicalReaction>
</comment>
<comment type="pathway">
    <text evidence="2">Fermentation; pyruvate fermentation to lactate; (S)-lactate from pyruvate: step 1/1.</text>
</comment>
<comment type="subunit">
    <text evidence="2">Homotetramer. Interacts with PTEN upstream reading frame protein MP31.</text>
</comment>
<comment type="subcellular location">
    <subcellularLocation>
        <location evidence="1">Cytoplasm</location>
    </subcellularLocation>
</comment>
<comment type="PTM">
    <text evidence="2">ISGylated.</text>
</comment>
<comment type="similarity">
    <text evidence="5">Belongs to the LDH/MDH superfamily. LDH family.</text>
</comment>
<reference key="1">
    <citation type="submission" date="2004-11" db="EMBL/GenBank/DDBJ databases">
        <authorList>
            <consortium name="The German cDNA consortium"/>
        </authorList>
    </citation>
    <scope>NUCLEOTIDE SEQUENCE [LARGE SCALE MRNA]</scope>
    <source>
        <tissue>Kidney</tissue>
    </source>
</reference>
<gene>
    <name type="primary">LDHA</name>
</gene>
<feature type="initiator methionine" description="Removed" evidence="2">
    <location>
        <position position="1"/>
    </location>
</feature>
<feature type="chain" id="PRO_0000168417" description="L-lactate dehydrogenase A chain">
    <location>
        <begin position="2"/>
        <end position="332"/>
    </location>
</feature>
<feature type="active site" description="Proton acceptor" evidence="1">
    <location>
        <position position="193"/>
    </location>
</feature>
<feature type="binding site" evidence="1">
    <location>
        <begin position="29"/>
        <end position="57"/>
    </location>
    <ligand>
        <name>NAD(+)</name>
        <dbReference type="ChEBI" id="CHEBI:57540"/>
    </ligand>
</feature>
<feature type="binding site" evidence="1">
    <location>
        <position position="99"/>
    </location>
    <ligand>
        <name>NAD(+)</name>
        <dbReference type="ChEBI" id="CHEBI:57540"/>
    </ligand>
</feature>
<feature type="binding site" evidence="1">
    <location>
        <position position="106"/>
    </location>
    <ligand>
        <name>substrate</name>
    </ligand>
</feature>
<feature type="binding site" evidence="1">
    <location>
        <position position="138"/>
    </location>
    <ligand>
        <name>substrate</name>
    </ligand>
</feature>
<feature type="binding site" evidence="1">
    <location>
        <position position="169"/>
    </location>
    <ligand>
        <name>substrate</name>
    </ligand>
</feature>
<feature type="binding site" evidence="1">
    <location>
        <position position="248"/>
    </location>
    <ligand>
        <name>substrate</name>
    </ligand>
</feature>
<feature type="modified residue" description="N-acetylalanine" evidence="2">
    <location>
        <position position="2"/>
    </location>
</feature>
<feature type="modified residue" description="N6-acetyllysine; alternate" evidence="2">
    <location>
        <position position="5"/>
    </location>
</feature>
<feature type="modified residue" description="N6-succinyllysine; alternate" evidence="4">
    <location>
        <position position="5"/>
    </location>
</feature>
<feature type="modified residue" description="N6-acetyllysine" evidence="2">
    <location>
        <position position="14"/>
    </location>
</feature>
<feature type="modified residue" description="Phosphothreonine" evidence="2">
    <location>
        <position position="18"/>
    </location>
</feature>
<feature type="modified residue" description="N6-acetyllysine; alternate" evidence="2">
    <location>
        <position position="57"/>
    </location>
</feature>
<feature type="modified residue" description="N6-acetyllysine" evidence="2">
    <location>
        <position position="81"/>
    </location>
</feature>
<feature type="modified residue" description="N6-acetyllysine; alternate" evidence="2">
    <location>
        <position position="118"/>
    </location>
</feature>
<feature type="modified residue" description="N6-succinyllysine; alternate" evidence="4">
    <location>
        <position position="118"/>
    </location>
</feature>
<feature type="modified residue" description="N6-acetyllysine" evidence="2">
    <location>
        <position position="126"/>
    </location>
</feature>
<feature type="modified residue" description="N6-acetyllysine" evidence="4">
    <location>
        <position position="224"/>
    </location>
</feature>
<feature type="modified residue" description="N6-acetyllysine" evidence="4">
    <location>
        <position position="232"/>
    </location>
</feature>
<feature type="modified residue" description="Phosphotyrosine" evidence="4">
    <location>
        <position position="239"/>
    </location>
</feature>
<feature type="modified residue" description="N6-acetyllysine" evidence="4">
    <location>
        <position position="243"/>
    </location>
</feature>
<feature type="modified residue" description="Phosphothreonine" evidence="3">
    <location>
        <position position="309"/>
    </location>
</feature>
<feature type="modified residue" description="Phosphoserine" evidence="2">
    <location>
        <position position="310"/>
    </location>
</feature>
<feature type="modified residue" description="N6-acetyllysine; alternate" evidence="2">
    <location>
        <position position="318"/>
    </location>
</feature>
<feature type="modified residue" description="N6-succinyllysine; alternate" evidence="4">
    <location>
        <position position="318"/>
    </location>
</feature>
<feature type="modified residue" description="Phosphothreonine" evidence="3">
    <location>
        <position position="322"/>
    </location>
</feature>
<feature type="cross-link" description="Glycyl lysine isopeptide (Lys-Gly) (interchain with G-Cter in SUMO2); alternate" evidence="2">
    <location>
        <position position="57"/>
    </location>
</feature>
<protein>
    <recommendedName>
        <fullName>L-lactate dehydrogenase A chain</fullName>
        <shortName>LDH-A</shortName>
        <ecNumber evidence="2">1.1.1.27</ecNumber>
    </recommendedName>
    <alternativeName>
        <fullName>LDH muscle subunit</fullName>
        <shortName>LDH-M</shortName>
    </alternativeName>
</protein>
<name>LDHA_PONAB</name>
<sequence length="332" mass="36637">MATLKDQLIHNLLKEEQTPQNKITVVGVGAVGMACAISILMKDLADELALVDVIEDKLKGEMMDLQHGSLFLRTPKIVSGKDYNVTANSKLVIITAGARQQEGESRLNLVQRNVNIFKFIIPNVVKYSPNCKLLIVSNPVDILTYVAWKISGFPKNRVIGSGCNLDSARFRYLMGERLGVHPSSCHGWVLGEHGDSSVPVWSGMNVAGVSLKTLHPDLGTDKDKEQWKEVHKQVVESAYEVIKLKGYTSWAIGLSVADLAESIMKNLRRVHPVSTMIKGLYGIKDDVFLSVPCILGQNGISDLVKVTLTSEEEARLKKSADTLWGIQKELQF</sequence>
<accession>Q5R5F0</accession>
<evidence type="ECO:0000250" key="1"/>
<evidence type="ECO:0000250" key="2">
    <source>
        <dbReference type="UniProtKB" id="P00338"/>
    </source>
</evidence>
<evidence type="ECO:0000250" key="3">
    <source>
        <dbReference type="UniProtKB" id="P04642"/>
    </source>
</evidence>
<evidence type="ECO:0000250" key="4">
    <source>
        <dbReference type="UniProtKB" id="P06151"/>
    </source>
</evidence>
<evidence type="ECO:0000305" key="5"/>
<dbReference type="EC" id="1.1.1.27" evidence="2"/>
<dbReference type="EMBL" id="CR860911">
    <property type="protein sequence ID" value="CAH93016.1"/>
    <property type="molecule type" value="mRNA"/>
</dbReference>
<dbReference type="RefSeq" id="NP_001126782.1">
    <property type="nucleotide sequence ID" value="NM_001133310.1"/>
</dbReference>
<dbReference type="SMR" id="Q5R5F0"/>
<dbReference type="STRING" id="9601.ENSPPYP00000003946"/>
<dbReference type="GeneID" id="100173786"/>
<dbReference type="KEGG" id="pon:100173786"/>
<dbReference type="CTD" id="3939"/>
<dbReference type="eggNOG" id="KOG1495">
    <property type="taxonomic scope" value="Eukaryota"/>
</dbReference>
<dbReference type="InParanoid" id="Q5R5F0"/>
<dbReference type="OrthoDB" id="5405561at2759"/>
<dbReference type="UniPathway" id="UPA00554">
    <property type="reaction ID" value="UER00611"/>
</dbReference>
<dbReference type="Proteomes" id="UP000001595">
    <property type="component" value="Unplaced"/>
</dbReference>
<dbReference type="GO" id="GO:0005737">
    <property type="term" value="C:cytoplasm"/>
    <property type="evidence" value="ECO:0007669"/>
    <property type="project" value="UniProtKB-SubCell"/>
</dbReference>
<dbReference type="GO" id="GO:0004459">
    <property type="term" value="F:L-lactate dehydrogenase activity"/>
    <property type="evidence" value="ECO:0007669"/>
    <property type="project" value="UniProtKB-EC"/>
</dbReference>
<dbReference type="GO" id="GO:0006089">
    <property type="term" value="P:lactate metabolic process"/>
    <property type="evidence" value="ECO:0007669"/>
    <property type="project" value="TreeGrafter"/>
</dbReference>
<dbReference type="CDD" id="cd05293">
    <property type="entry name" value="LDH_1"/>
    <property type="match status" value="1"/>
</dbReference>
<dbReference type="FunFam" id="3.40.50.720:FF:000029">
    <property type="entry name" value="L-lactate dehydrogenase A chain"/>
    <property type="match status" value="1"/>
</dbReference>
<dbReference type="FunFam" id="3.90.110.10:FF:000003">
    <property type="entry name" value="L-lactate dehydrogenase A chain"/>
    <property type="match status" value="1"/>
</dbReference>
<dbReference type="Gene3D" id="3.90.110.10">
    <property type="entry name" value="Lactate dehydrogenase/glycoside hydrolase, family 4, C-terminal"/>
    <property type="match status" value="1"/>
</dbReference>
<dbReference type="Gene3D" id="3.40.50.720">
    <property type="entry name" value="NAD(P)-binding Rossmann-like Domain"/>
    <property type="match status" value="1"/>
</dbReference>
<dbReference type="HAMAP" id="MF_00488">
    <property type="entry name" value="Lactate_dehydrog"/>
    <property type="match status" value="1"/>
</dbReference>
<dbReference type="InterPro" id="IPR001557">
    <property type="entry name" value="L-lactate/malate_DH"/>
</dbReference>
<dbReference type="InterPro" id="IPR011304">
    <property type="entry name" value="L-lactate_DH"/>
</dbReference>
<dbReference type="InterPro" id="IPR018177">
    <property type="entry name" value="L-lactate_DH_AS"/>
</dbReference>
<dbReference type="InterPro" id="IPR022383">
    <property type="entry name" value="Lactate/malate_DH_C"/>
</dbReference>
<dbReference type="InterPro" id="IPR001236">
    <property type="entry name" value="Lactate/malate_DH_N"/>
</dbReference>
<dbReference type="InterPro" id="IPR015955">
    <property type="entry name" value="Lactate_DH/Glyco_Ohase_4_C"/>
</dbReference>
<dbReference type="InterPro" id="IPR036291">
    <property type="entry name" value="NAD(P)-bd_dom_sf"/>
</dbReference>
<dbReference type="NCBIfam" id="TIGR01771">
    <property type="entry name" value="L-LDH-NAD"/>
    <property type="match status" value="1"/>
</dbReference>
<dbReference type="NCBIfam" id="NF000824">
    <property type="entry name" value="PRK00066.1"/>
    <property type="match status" value="1"/>
</dbReference>
<dbReference type="NCBIfam" id="NF004863">
    <property type="entry name" value="PRK06223.1"/>
    <property type="match status" value="1"/>
</dbReference>
<dbReference type="PANTHER" id="PTHR43128">
    <property type="entry name" value="L-2-HYDROXYCARBOXYLATE DEHYDROGENASE (NAD(P)(+))"/>
    <property type="match status" value="1"/>
</dbReference>
<dbReference type="PANTHER" id="PTHR43128:SF10">
    <property type="entry name" value="L-LACTATE DEHYDROGENASE A CHAIN"/>
    <property type="match status" value="1"/>
</dbReference>
<dbReference type="Pfam" id="PF02866">
    <property type="entry name" value="Ldh_1_C"/>
    <property type="match status" value="1"/>
</dbReference>
<dbReference type="Pfam" id="PF00056">
    <property type="entry name" value="Ldh_1_N"/>
    <property type="match status" value="1"/>
</dbReference>
<dbReference type="PIRSF" id="PIRSF000102">
    <property type="entry name" value="Lac_mal_DH"/>
    <property type="match status" value="1"/>
</dbReference>
<dbReference type="PRINTS" id="PR00086">
    <property type="entry name" value="LLDHDRGNASE"/>
</dbReference>
<dbReference type="SUPFAM" id="SSF56327">
    <property type="entry name" value="LDH C-terminal domain-like"/>
    <property type="match status" value="1"/>
</dbReference>
<dbReference type="SUPFAM" id="SSF51735">
    <property type="entry name" value="NAD(P)-binding Rossmann-fold domains"/>
    <property type="match status" value="1"/>
</dbReference>
<dbReference type="PROSITE" id="PS00064">
    <property type="entry name" value="L_LDH"/>
    <property type="match status" value="1"/>
</dbReference>